<reference key="1">
    <citation type="submission" date="2006-09" db="EMBL/GenBank/DDBJ databases">
        <authorList>
            <consortium name="NIH - Mammalian Gene Collection (MGC) project"/>
        </authorList>
    </citation>
    <scope>NUCLEOTIDE SEQUENCE [LARGE SCALE MRNA]</scope>
    <source>
        <strain>Hereford</strain>
        <tissue>Thalamus</tissue>
    </source>
</reference>
<reference key="2">
    <citation type="journal article" date="2011" name="FEBS Lett.">
        <title>Chelerythrine perturbs lamellar actomyosin filaments by selective inhibition of myotonic dystrophy kinase-related Cdc42-binding kinase.</title>
        <authorList>
            <person name="Tan I."/>
            <person name="Lai J."/>
            <person name="Yong J."/>
            <person name="Li S.F."/>
            <person name="Leung T."/>
        </authorList>
    </citation>
    <scope>FUNCTION IN PHOSPHORYLATION OF MYL9/MLC2</scope>
</reference>
<feature type="initiator methionine" description="Removed" evidence="4">
    <location>
        <position position="1"/>
    </location>
</feature>
<feature type="chain" id="PRO_0000286350" description="Serine/threonine-protein kinase PAK 1">
    <location>
        <begin position="2"/>
        <end position="544"/>
    </location>
</feature>
<feature type="domain" description="CRIB" evidence="5">
    <location>
        <begin position="75"/>
        <end position="88"/>
    </location>
</feature>
<feature type="domain" description="Protein kinase" evidence="6">
    <location>
        <begin position="269"/>
        <end position="520"/>
    </location>
</feature>
<feature type="region of interest" description="Disordered" evidence="8">
    <location>
        <begin position="1"/>
        <end position="77"/>
    </location>
</feature>
<feature type="region of interest" description="Autoregulatory region" evidence="4">
    <location>
        <begin position="70"/>
        <end position="140"/>
    </location>
</feature>
<feature type="region of interest" description="GTPase-binding" evidence="4">
    <location>
        <begin position="75"/>
        <end position="105"/>
    </location>
</feature>
<feature type="region of interest" description="Disordered" evidence="8">
    <location>
        <begin position="161"/>
        <end position="193"/>
    </location>
</feature>
<feature type="region of interest" description="Disordered" evidence="8">
    <location>
        <begin position="212"/>
        <end position="250"/>
    </location>
</feature>
<feature type="compositionally biased region" description="Basic and acidic residues" evidence="8">
    <location>
        <begin position="68"/>
        <end position="77"/>
    </location>
</feature>
<feature type="compositionally biased region" description="Acidic residues" evidence="8">
    <location>
        <begin position="174"/>
        <end position="183"/>
    </location>
</feature>
<feature type="compositionally biased region" description="Polar residues" evidence="8">
    <location>
        <begin position="219"/>
        <end position="230"/>
    </location>
</feature>
<feature type="active site" description="Proton acceptor" evidence="6 7">
    <location>
        <position position="388"/>
    </location>
</feature>
<feature type="binding site" evidence="6">
    <location>
        <begin position="275"/>
        <end position="283"/>
    </location>
    <ligand>
        <name>ATP</name>
        <dbReference type="ChEBI" id="CHEBI:30616"/>
    </ligand>
</feature>
<feature type="binding site" evidence="6">
    <location>
        <position position="298"/>
    </location>
    <ligand>
        <name>ATP</name>
        <dbReference type="ChEBI" id="CHEBI:30616"/>
    </ligand>
</feature>
<feature type="modified residue" description="N-acetylserine" evidence="4">
    <location>
        <position position="2"/>
    </location>
</feature>
<feature type="modified residue" description="Phosphoserine; by PKB and autocatalysis" evidence="4">
    <location>
        <position position="21"/>
    </location>
</feature>
<feature type="modified residue" description="Phosphothreonine; by OXSR1" evidence="3">
    <location>
        <position position="84"/>
    </location>
</feature>
<feature type="modified residue" description="Phosphoserine" evidence="4">
    <location>
        <position position="115"/>
    </location>
</feature>
<feature type="modified residue" description="Phosphotyrosine" evidence="4">
    <location>
        <position position="131"/>
    </location>
</feature>
<feature type="modified residue" description="Phosphotyrosine" evidence="4">
    <location>
        <position position="142"/>
    </location>
</feature>
<feature type="modified residue" description="Phosphoserine; by autocatalysis" evidence="3">
    <location>
        <position position="144"/>
    </location>
</feature>
<feature type="modified residue" description="Phosphoserine; by autocatalysis" evidence="3">
    <location>
        <position position="149"/>
    </location>
</feature>
<feature type="modified residue" description="Phosphotyrosine; by JAK2" evidence="4">
    <location>
        <position position="153"/>
    </location>
</feature>
<feature type="modified residue" description="Phosphoserine" evidence="4">
    <location>
        <position position="174"/>
    </location>
</feature>
<feature type="modified residue" description="Phosphothreonine" evidence="4">
    <location>
        <position position="184"/>
    </location>
</feature>
<feature type="modified residue" description="Phosphoserine; by autocatalysis" evidence="3">
    <location>
        <position position="198"/>
    </location>
</feature>
<feature type="modified residue" description="Phosphotyrosine; by JAK2" evidence="4">
    <location>
        <position position="200"/>
    </location>
</feature>
<feature type="modified residue" description="Phosphoserine; by autocatalysis" evidence="3">
    <location>
        <position position="203"/>
    </location>
</feature>
<feature type="modified residue" description="Phosphothreonine" evidence="4">
    <location>
        <position position="211"/>
    </location>
</feature>
<feature type="modified residue" description="Phosphothreonine" evidence="4">
    <location>
        <position position="218"/>
    </location>
</feature>
<feature type="modified residue" description="Phosphoserine" evidence="4">
    <location>
        <position position="219"/>
    </location>
</feature>
<feature type="modified residue" description="Phosphoserine" evidence="4">
    <location>
        <position position="222"/>
    </location>
</feature>
<feature type="modified residue" description="Phosphothreonine" evidence="2">
    <location>
        <position position="224"/>
    </location>
</feature>
<feature type="modified residue" description="Phosphothreonine" evidence="2">
    <location>
        <position position="228"/>
    </location>
</feature>
<feature type="modified residue" description="Phosphothreonine" evidence="4">
    <location>
        <position position="229"/>
    </location>
</feature>
<feature type="modified residue" description="Phosphotyrosine; by JAK2" evidence="4">
    <location>
        <position position="284"/>
    </location>
</feature>
<feature type="modified residue" description="Phosphothreonine; by autocatalysis, BRSK2 and PDPK1" evidence="4">
    <location>
        <position position="422"/>
    </location>
</feature>
<evidence type="ECO:0000250" key="1"/>
<evidence type="ECO:0000250" key="2">
    <source>
        <dbReference type="UniProtKB" id="O88643"/>
    </source>
</evidence>
<evidence type="ECO:0000250" key="3">
    <source>
        <dbReference type="UniProtKB" id="P35465"/>
    </source>
</evidence>
<evidence type="ECO:0000250" key="4">
    <source>
        <dbReference type="UniProtKB" id="Q13153"/>
    </source>
</evidence>
<evidence type="ECO:0000255" key="5">
    <source>
        <dbReference type="PROSITE-ProRule" id="PRU00057"/>
    </source>
</evidence>
<evidence type="ECO:0000255" key="6">
    <source>
        <dbReference type="PROSITE-ProRule" id="PRU00159"/>
    </source>
</evidence>
<evidence type="ECO:0000255" key="7">
    <source>
        <dbReference type="PROSITE-ProRule" id="PRU10027"/>
    </source>
</evidence>
<evidence type="ECO:0000256" key="8">
    <source>
        <dbReference type="SAM" id="MobiDB-lite"/>
    </source>
</evidence>
<evidence type="ECO:0000269" key="9">
    <source>
    </source>
</evidence>
<evidence type="ECO:0000305" key="10"/>
<gene>
    <name evidence="4" type="primary">PAK1</name>
</gene>
<keyword id="KW-0007">Acetylation</keyword>
<keyword id="KW-0021">Allosteric enzyme</keyword>
<keyword id="KW-0053">Apoptosis</keyword>
<keyword id="KW-0067">ATP-binding</keyword>
<keyword id="KW-0965">Cell junction</keyword>
<keyword id="KW-1003">Cell membrane</keyword>
<keyword id="KW-0966">Cell projection</keyword>
<keyword id="KW-0158">Chromosome</keyword>
<keyword id="KW-0963">Cytoplasm</keyword>
<keyword id="KW-0206">Cytoskeleton</keyword>
<keyword id="KW-0268">Exocytosis</keyword>
<keyword id="KW-0418">Kinase</keyword>
<keyword id="KW-0472">Membrane</keyword>
<keyword id="KW-0547">Nucleotide-binding</keyword>
<keyword id="KW-0539">Nucleus</keyword>
<keyword id="KW-0597">Phosphoprotein</keyword>
<keyword id="KW-1185">Reference proteome</keyword>
<keyword id="KW-0723">Serine/threonine-protein kinase</keyword>
<keyword id="KW-0808">Transferase</keyword>
<name>PAK1_BOVIN</name>
<dbReference type="EC" id="2.7.11.1" evidence="4"/>
<dbReference type="EMBL" id="BC123416">
    <property type="protein sequence ID" value="AAI23417.1"/>
    <property type="molecule type" value="mRNA"/>
</dbReference>
<dbReference type="RefSeq" id="NP_001070366.1">
    <property type="nucleotide sequence ID" value="NM_001076898.1"/>
</dbReference>
<dbReference type="RefSeq" id="XP_010819137.1">
    <property type="nucleotide sequence ID" value="XM_010820835.3"/>
</dbReference>
<dbReference type="RefSeq" id="XP_010819138.1">
    <property type="nucleotide sequence ID" value="XM_010820836.4"/>
</dbReference>
<dbReference type="RefSeq" id="XP_010819139.1">
    <property type="nucleotide sequence ID" value="XM_010820837.3"/>
</dbReference>
<dbReference type="RefSeq" id="XP_015316619.1">
    <property type="nucleotide sequence ID" value="XM_015461133.3"/>
</dbReference>
<dbReference type="RefSeq" id="XP_024842975.1">
    <property type="nucleotide sequence ID" value="XM_024987207.2"/>
</dbReference>
<dbReference type="SMR" id="Q08E52"/>
<dbReference type="FunCoup" id="Q08E52">
    <property type="interactions" value="1823"/>
</dbReference>
<dbReference type="IntAct" id="Q08E52">
    <property type="interactions" value="1"/>
</dbReference>
<dbReference type="MINT" id="Q08E52"/>
<dbReference type="STRING" id="9913.ENSBTAP00000013448"/>
<dbReference type="PaxDb" id="9913-ENSBTAP00000013448"/>
<dbReference type="PeptideAtlas" id="Q08E52"/>
<dbReference type="Ensembl" id="ENSBTAT00000013448.6">
    <property type="protein sequence ID" value="ENSBTAP00000013448.5"/>
    <property type="gene ID" value="ENSBTAG00000010191.7"/>
</dbReference>
<dbReference type="GeneID" id="533729"/>
<dbReference type="KEGG" id="bta:533729"/>
<dbReference type="CTD" id="5058"/>
<dbReference type="VEuPathDB" id="HostDB:ENSBTAG00000010191"/>
<dbReference type="VGNC" id="VGNC:53657">
    <property type="gene designation" value="PAK1"/>
</dbReference>
<dbReference type="eggNOG" id="KOG0578">
    <property type="taxonomic scope" value="Eukaryota"/>
</dbReference>
<dbReference type="GeneTree" id="ENSGT00950000182988"/>
<dbReference type="HOGENOM" id="CLU_000288_26_6_1"/>
<dbReference type="InParanoid" id="Q08E52"/>
<dbReference type="OMA" id="YMDFPPL"/>
<dbReference type="OrthoDB" id="2914378at2759"/>
<dbReference type="TreeFam" id="TF105351"/>
<dbReference type="Reactome" id="R-BTA-202433">
    <property type="pathway name" value="Generation of second messenger molecules"/>
</dbReference>
<dbReference type="Reactome" id="R-BTA-2029482">
    <property type="pathway name" value="Regulation of actin dynamics for phagocytic cup formation"/>
</dbReference>
<dbReference type="Reactome" id="R-BTA-2871796">
    <property type="pathway name" value="FCERI mediated MAPK activation"/>
</dbReference>
<dbReference type="Reactome" id="R-BTA-389359">
    <property type="pathway name" value="CD28 dependent Vav1 pathway"/>
</dbReference>
<dbReference type="Reactome" id="R-BTA-3928662">
    <property type="pathway name" value="EPHB-mediated forward signaling"/>
</dbReference>
<dbReference type="Reactome" id="R-BTA-3928664">
    <property type="pathway name" value="Ephrin signaling"/>
</dbReference>
<dbReference type="Reactome" id="R-BTA-399954">
    <property type="pathway name" value="Sema3A PAK dependent Axon repulsion"/>
</dbReference>
<dbReference type="Reactome" id="R-BTA-445144">
    <property type="pathway name" value="Signal transduction by L1"/>
</dbReference>
<dbReference type="Reactome" id="R-BTA-445355">
    <property type="pathway name" value="Smooth Muscle Contraction"/>
</dbReference>
<dbReference type="Reactome" id="R-BTA-5218920">
    <property type="pathway name" value="VEGFR2 mediated vascular permeability"/>
</dbReference>
<dbReference type="Reactome" id="R-BTA-5627123">
    <property type="pathway name" value="RHO GTPases activate PAKs"/>
</dbReference>
<dbReference type="Reactome" id="R-BTA-5687128">
    <property type="pathway name" value="MAPK6/MAPK4 signaling"/>
</dbReference>
<dbReference type="Reactome" id="R-BTA-8964616">
    <property type="pathway name" value="G beta:gamma signalling through CDC42"/>
</dbReference>
<dbReference type="Reactome" id="R-BTA-9013149">
    <property type="pathway name" value="RAC1 GTPase cycle"/>
</dbReference>
<dbReference type="Reactome" id="R-BTA-9013404">
    <property type="pathway name" value="RAC2 GTPase cycle"/>
</dbReference>
<dbReference type="Reactome" id="R-BTA-9013406">
    <property type="pathway name" value="RHOQ GTPase cycle"/>
</dbReference>
<dbReference type="Reactome" id="R-BTA-9013407">
    <property type="pathway name" value="RHOH GTPase cycle"/>
</dbReference>
<dbReference type="Reactome" id="R-BTA-9013420">
    <property type="pathway name" value="RHOU GTPase cycle"/>
</dbReference>
<dbReference type="Reactome" id="R-BTA-9013423">
    <property type="pathway name" value="RAC3 GTPase cycle"/>
</dbReference>
<dbReference type="Reactome" id="R-BTA-9013424">
    <property type="pathway name" value="RHOV GTPase cycle"/>
</dbReference>
<dbReference type="Proteomes" id="UP000009136">
    <property type="component" value="Chromosome 29"/>
</dbReference>
<dbReference type="Bgee" id="ENSBTAG00000010191">
    <property type="expression patterns" value="Expressed in prefrontal cortex and 103 other cell types or tissues"/>
</dbReference>
<dbReference type="GO" id="GO:0005911">
    <property type="term" value="C:cell-cell junction"/>
    <property type="evidence" value="ECO:0000250"/>
    <property type="project" value="UniProtKB"/>
</dbReference>
<dbReference type="GO" id="GO:0005813">
    <property type="term" value="C:centrosome"/>
    <property type="evidence" value="ECO:0007669"/>
    <property type="project" value="UniProtKB-SubCell"/>
</dbReference>
<dbReference type="GO" id="GO:0005694">
    <property type="term" value="C:chromosome"/>
    <property type="evidence" value="ECO:0007669"/>
    <property type="project" value="UniProtKB-SubCell"/>
</dbReference>
<dbReference type="GO" id="GO:0005737">
    <property type="term" value="C:cytoplasm"/>
    <property type="evidence" value="ECO:0000250"/>
    <property type="project" value="UniProtKB"/>
</dbReference>
<dbReference type="GO" id="GO:0005925">
    <property type="term" value="C:focal adhesion"/>
    <property type="evidence" value="ECO:0007669"/>
    <property type="project" value="UniProtKB-SubCell"/>
</dbReference>
<dbReference type="GO" id="GO:0030027">
    <property type="term" value="C:lamellipodium"/>
    <property type="evidence" value="ECO:0007669"/>
    <property type="project" value="UniProtKB-SubCell"/>
</dbReference>
<dbReference type="GO" id="GO:0005654">
    <property type="term" value="C:nucleoplasm"/>
    <property type="evidence" value="ECO:0000250"/>
    <property type="project" value="UniProtKB"/>
</dbReference>
<dbReference type="GO" id="GO:0005886">
    <property type="term" value="C:plasma membrane"/>
    <property type="evidence" value="ECO:0000250"/>
    <property type="project" value="UniProtKB"/>
</dbReference>
<dbReference type="GO" id="GO:0001726">
    <property type="term" value="C:ruffle"/>
    <property type="evidence" value="ECO:0000250"/>
    <property type="project" value="UniProtKB"/>
</dbReference>
<dbReference type="GO" id="GO:0032587">
    <property type="term" value="C:ruffle membrane"/>
    <property type="evidence" value="ECO:0007669"/>
    <property type="project" value="UniProtKB-SubCell"/>
</dbReference>
<dbReference type="GO" id="GO:0005524">
    <property type="term" value="F:ATP binding"/>
    <property type="evidence" value="ECO:0007669"/>
    <property type="project" value="UniProtKB-KW"/>
</dbReference>
<dbReference type="GO" id="GO:0005518">
    <property type="term" value="F:collagen binding"/>
    <property type="evidence" value="ECO:0000250"/>
    <property type="project" value="UniProtKB"/>
</dbReference>
<dbReference type="GO" id="GO:0043015">
    <property type="term" value="F:gamma-tubulin binding"/>
    <property type="evidence" value="ECO:0000250"/>
    <property type="project" value="UniProtKB"/>
</dbReference>
<dbReference type="GO" id="GO:0106310">
    <property type="term" value="F:protein serine kinase activity"/>
    <property type="evidence" value="ECO:0007669"/>
    <property type="project" value="RHEA"/>
</dbReference>
<dbReference type="GO" id="GO:0004674">
    <property type="term" value="F:protein serine/threonine kinase activity"/>
    <property type="evidence" value="ECO:0000250"/>
    <property type="project" value="UniProtKB"/>
</dbReference>
<dbReference type="GO" id="GO:0030036">
    <property type="term" value="P:actin cytoskeleton organization"/>
    <property type="evidence" value="ECO:0000250"/>
    <property type="project" value="UniProtKB"/>
</dbReference>
<dbReference type="GO" id="GO:0006915">
    <property type="term" value="P:apoptotic process"/>
    <property type="evidence" value="ECO:0007669"/>
    <property type="project" value="UniProtKB-KW"/>
</dbReference>
<dbReference type="GO" id="GO:0048754">
    <property type="term" value="P:branching morphogenesis of an epithelial tube"/>
    <property type="evidence" value="ECO:0000250"/>
    <property type="project" value="UniProtKB"/>
</dbReference>
<dbReference type="GO" id="GO:0016477">
    <property type="term" value="P:cell migration"/>
    <property type="evidence" value="ECO:0000318"/>
    <property type="project" value="GO_Central"/>
</dbReference>
<dbReference type="GO" id="GO:0009267">
    <property type="term" value="P:cellular response to starvation"/>
    <property type="evidence" value="ECO:0000318"/>
    <property type="project" value="GO_Central"/>
</dbReference>
<dbReference type="GO" id="GO:0006338">
    <property type="term" value="P:chromatin remodeling"/>
    <property type="evidence" value="ECO:0000250"/>
    <property type="project" value="UniProtKB"/>
</dbReference>
<dbReference type="GO" id="GO:0006974">
    <property type="term" value="P:DNA damage response"/>
    <property type="evidence" value="ECO:0000250"/>
    <property type="project" value="UniProtKB"/>
</dbReference>
<dbReference type="GO" id="GO:0006887">
    <property type="term" value="P:exocytosis"/>
    <property type="evidence" value="ECO:0007669"/>
    <property type="project" value="UniProtKB-KW"/>
</dbReference>
<dbReference type="GO" id="GO:0035556">
    <property type="term" value="P:intracellular signal transduction"/>
    <property type="evidence" value="ECO:0000318"/>
    <property type="project" value="GO_Central"/>
</dbReference>
<dbReference type="GO" id="GO:0060244">
    <property type="term" value="P:negative regulation of cell proliferation involved in contact inhibition"/>
    <property type="evidence" value="ECO:0000250"/>
    <property type="project" value="UniProtKB"/>
</dbReference>
<dbReference type="GO" id="GO:0030335">
    <property type="term" value="P:positive regulation of cell migration"/>
    <property type="evidence" value="ECO:0000250"/>
    <property type="project" value="UniProtKB"/>
</dbReference>
<dbReference type="GO" id="GO:0033148">
    <property type="term" value="P:positive regulation of intracellular estrogen receptor signaling pathway"/>
    <property type="evidence" value="ECO:0000250"/>
    <property type="project" value="UniProtKB"/>
</dbReference>
<dbReference type="GO" id="GO:0090063">
    <property type="term" value="P:positive regulation of microtubule nucleation"/>
    <property type="evidence" value="ECO:0000250"/>
    <property type="project" value="UniProtKB"/>
</dbReference>
<dbReference type="GO" id="GO:0051496">
    <property type="term" value="P:positive regulation of stress fiber assembly"/>
    <property type="evidence" value="ECO:0000250"/>
    <property type="project" value="UniProtKB"/>
</dbReference>
<dbReference type="GO" id="GO:1903608">
    <property type="term" value="P:protein localization to cytoplasmic stress granule"/>
    <property type="evidence" value="ECO:0000250"/>
    <property type="project" value="UniProtKB"/>
</dbReference>
<dbReference type="GO" id="GO:0032956">
    <property type="term" value="P:regulation of actin cytoskeleton organization"/>
    <property type="evidence" value="ECO:0000318"/>
    <property type="project" value="GO_Central"/>
</dbReference>
<dbReference type="GO" id="GO:0050770">
    <property type="term" value="P:regulation of axonogenesis"/>
    <property type="evidence" value="ECO:0000318"/>
    <property type="project" value="GO_Central"/>
</dbReference>
<dbReference type="GO" id="GO:0043408">
    <property type="term" value="P:regulation of MAPK cascade"/>
    <property type="evidence" value="ECO:0000318"/>
    <property type="project" value="GO_Central"/>
</dbReference>
<dbReference type="GO" id="GO:0042060">
    <property type="term" value="P:wound healing"/>
    <property type="evidence" value="ECO:0000250"/>
    <property type="project" value="UniProtKB"/>
</dbReference>
<dbReference type="CDD" id="cd01093">
    <property type="entry name" value="CRIB_PAK_like"/>
    <property type="match status" value="1"/>
</dbReference>
<dbReference type="CDD" id="cd06654">
    <property type="entry name" value="STKc_PAK1"/>
    <property type="match status" value="1"/>
</dbReference>
<dbReference type="FunFam" id="1.10.510.10:FF:000011">
    <property type="entry name" value="Non-specific serine/threonine protein kinase"/>
    <property type="match status" value="1"/>
</dbReference>
<dbReference type="FunFam" id="3.30.200.20:FF:000069">
    <property type="entry name" value="Non-specific serine/threonine protein kinase"/>
    <property type="match status" value="1"/>
</dbReference>
<dbReference type="FunFam" id="3.90.810.10:FF:000001">
    <property type="entry name" value="Non-specific serine/threonine protein kinase"/>
    <property type="match status" value="1"/>
</dbReference>
<dbReference type="Gene3D" id="3.90.810.10">
    <property type="entry name" value="CRIB domain"/>
    <property type="match status" value="1"/>
</dbReference>
<dbReference type="Gene3D" id="3.30.200.20">
    <property type="entry name" value="Phosphorylase Kinase, domain 1"/>
    <property type="match status" value="1"/>
</dbReference>
<dbReference type="Gene3D" id="1.10.510.10">
    <property type="entry name" value="Transferase(Phosphotransferase) domain 1"/>
    <property type="match status" value="1"/>
</dbReference>
<dbReference type="InterPro" id="IPR000095">
    <property type="entry name" value="CRIB_dom"/>
</dbReference>
<dbReference type="InterPro" id="IPR036936">
    <property type="entry name" value="CRIB_dom_sf"/>
</dbReference>
<dbReference type="InterPro" id="IPR011009">
    <property type="entry name" value="Kinase-like_dom_sf"/>
</dbReference>
<dbReference type="InterPro" id="IPR051931">
    <property type="entry name" value="PAK3-like"/>
</dbReference>
<dbReference type="InterPro" id="IPR033923">
    <property type="entry name" value="PAK_BD"/>
</dbReference>
<dbReference type="InterPro" id="IPR000719">
    <property type="entry name" value="Prot_kinase_dom"/>
</dbReference>
<dbReference type="InterPro" id="IPR017441">
    <property type="entry name" value="Protein_kinase_ATP_BS"/>
</dbReference>
<dbReference type="InterPro" id="IPR008271">
    <property type="entry name" value="Ser/Thr_kinase_AS"/>
</dbReference>
<dbReference type="PANTHER" id="PTHR45832:SF10">
    <property type="entry name" value="NON-SPECIFIC SERINE_THREONINE PROTEIN KINASE"/>
    <property type="match status" value="1"/>
</dbReference>
<dbReference type="PANTHER" id="PTHR45832">
    <property type="entry name" value="SERINE/THREONINE-PROTEIN KINASE SAMKA-RELATED-RELATED"/>
    <property type="match status" value="1"/>
</dbReference>
<dbReference type="Pfam" id="PF00786">
    <property type="entry name" value="PBD"/>
    <property type="match status" value="1"/>
</dbReference>
<dbReference type="Pfam" id="PF00069">
    <property type="entry name" value="Pkinase"/>
    <property type="match status" value="1"/>
</dbReference>
<dbReference type="SMART" id="SM00285">
    <property type="entry name" value="PBD"/>
    <property type="match status" value="1"/>
</dbReference>
<dbReference type="SMART" id="SM00220">
    <property type="entry name" value="S_TKc"/>
    <property type="match status" value="1"/>
</dbReference>
<dbReference type="SUPFAM" id="SSF56112">
    <property type="entry name" value="Protein kinase-like (PK-like)"/>
    <property type="match status" value="1"/>
</dbReference>
<dbReference type="PROSITE" id="PS50108">
    <property type="entry name" value="CRIB"/>
    <property type="match status" value="1"/>
</dbReference>
<dbReference type="PROSITE" id="PS00107">
    <property type="entry name" value="PROTEIN_KINASE_ATP"/>
    <property type="match status" value="1"/>
</dbReference>
<dbReference type="PROSITE" id="PS50011">
    <property type="entry name" value="PROTEIN_KINASE_DOM"/>
    <property type="match status" value="1"/>
</dbReference>
<dbReference type="PROSITE" id="PS00108">
    <property type="entry name" value="PROTEIN_KINASE_ST"/>
    <property type="match status" value="1"/>
</dbReference>
<sequence>MSNNGLDIQDKPPAPPMRNTSTMIGAGSKDAGTLNHGSKPLPPNPEEKKKKDRFYRAILPGDKTNKKKEKERPEISLPSDFEHTIHVGFDAVTGEFTGMPEQWARLLQTSNITKSEQKKNPQAVLDVLEFYNSKKTSNSQKYMSFTDKSAEDYNSSNTLNVKAVSETPAVPPVSEDEDDDDDGTPPPVIAPRPEHTKSVYTRSVIEPLPITPTRDVATSPISPTENNTTPPDALTRNTEKQKKKPKMSDEEILEKLRSIVSVGDPKKKYTRFEKIGQGASGTVYTAMDVATGQEVAIKQMNLQQQPKKELIINEILVMRENKNPNIVNYLDSYLVGDELWVVMEYLAGGSLTDVVTETCMDEGQIAAVCRECLQALEFLHSNQVIHRDIKSDNILLGMDGSVKLTDFGFCAQITPEQSKRSTMVGTPYWMAPEVVTRKAYGPKVDIWSLGIMAIEMIEGEPPYLNENPLRALYLIATNGTPELQNPEKLSAIFRDFLNRCLEMDVEKRGSAKELLQHQFLKIAKPLSSLTPLIAAAKEATKNNH</sequence>
<proteinExistence type="evidence at protein level"/>
<comment type="function">
    <text evidence="2 3 4 9">Protein kinase involved in intracellular signaling pathways downstream of integrins and receptor-type kinases that plays an important role in cytoskeleton dynamics, in cell adhesion, migration, proliferation, apoptosis, mitosis, and in vesicle-mediated transport processes (By similarity). Can directly phosphorylate BAD and protects cells against apoptosis (By similarity). Activated by interaction with CDC42 and RAC1 (By similarity). Functions as a GTPase effector that links the Rho-related GTPases CDC42 and RAC1 to the JNK MAP kinase pathway (By similarity). Phosphorylates and activates MAP2K1, and thereby mediates activation of downstream MAP kinases (By similarity). Involved in the reorganization of the actin cytoskeleton, actin stress fibers and of focal adhesion complexes (By similarity). Phosphorylates the tubulin chaperone TBCB and thereby plays a role in the regulation of microtubule biogenesis and organization of the tubulin cytoskeleton (By similarity). Plays a role in the regulation of insulin secretion in response to elevated glucose levels (By similarity). Part of a ternary complex that contains PAK1, DVL1 and MUSK that is important for MUSK-dependent regulation of AChR clustering during the formation of the neuromuscular junction (NMJ) (By similarity). Activity is inhibited in cells undergoing apoptosis, potentially due to binding of CDC2L1 and CDC2L2 (By similarity). Phosphorylates MYL9/MLC2 (PubMed:21457715). Phosphorylates RAF1 at 'Ser-338' and 'Ser-339' resulting in: activation of RAF1, stimulation of RAF1 translocation to mitochondria, phosphorylation of BAD by RAF1, and RAF1 binding to BCL2 (By similarity). Phosphorylates SNAI1 at 'Ser-246' promoting its transcriptional repressor activity by increasing its accumulation in the nucleus (By similarity). In podocytes, promotes NR3C2 nuclear localization (By similarity). Required for atypical chemokine receptor ACKR2-induced phosphorylation of LIMK1 and cofilin (CFL1) and for the up-regulation of ACKR2 from endosomal compartment to cell membrane, increasing its efficiency in chemokine uptake and degradation (By similarity). In synapses, seems to mediate the regulation of F-actin cluster formation performed by SHANK3, maybe through CFL1 phosphorylation and inactivation (By similarity). Plays a role in RUFY3-mediated facilitating gastric cancer cells migration and invasion (By similarity). In response to DNA damage, phosphorylates MORC2 which activates its ATPase activity and facilitates chromatin remodeling (By similarity). In neurons, plays a crucial role in regulating GABA(A) receptor synaptic stability and hence GABAergic inhibitory synaptic transmission through its role in F-actin stabilization (By similarity). In hippocampal neurons, necessary for the formation of dendritic spines and excitatory synapses; this function is dependent on kinase activity and may be exerted by the regulation of actomyosin contractility through the phosphorylation of myosin II regulatory light chain (MLC) (By similarity). Along with GIT1, positively regulates microtubule nucleation during interphase (By similarity). Phosphorylates FXR1, promoting its localization to stress granules and activity (By similarity). Phosphorylates ILK on 'Thr-173' and 'Ser-246', promoting nuclear export of ILK (By similarity).</text>
</comment>
<comment type="catalytic activity">
    <reaction evidence="3 4">
        <text>L-seryl-[protein] + ATP = O-phospho-L-seryl-[protein] + ADP + H(+)</text>
        <dbReference type="Rhea" id="RHEA:17989"/>
        <dbReference type="Rhea" id="RHEA-COMP:9863"/>
        <dbReference type="Rhea" id="RHEA-COMP:11604"/>
        <dbReference type="ChEBI" id="CHEBI:15378"/>
        <dbReference type="ChEBI" id="CHEBI:29999"/>
        <dbReference type="ChEBI" id="CHEBI:30616"/>
        <dbReference type="ChEBI" id="CHEBI:83421"/>
        <dbReference type="ChEBI" id="CHEBI:456216"/>
        <dbReference type="EC" id="2.7.11.1"/>
    </reaction>
</comment>
<comment type="catalytic activity">
    <reaction evidence="3 4">
        <text>L-threonyl-[protein] + ATP = O-phospho-L-threonyl-[protein] + ADP + H(+)</text>
        <dbReference type="Rhea" id="RHEA:46608"/>
        <dbReference type="Rhea" id="RHEA-COMP:11060"/>
        <dbReference type="Rhea" id="RHEA-COMP:11605"/>
        <dbReference type="ChEBI" id="CHEBI:15378"/>
        <dbReference type="ChEBI" id="CHEBI:30013"/>
        <dbReference type="ChEBI" id="CHEBI:30616"/>
        <dbReference type="ChEBI" id="CHEBI:61977"/>
        <dbReference type="ChEBI" id="CHEBI:456216"/>
        <dbReference type="EC" id="2.7.11.1"/>
    </reaction>
</comment>
<comment type="cofactor">
    <cofactor evidence="4">
        <name>Mg(2+)</name>
        <dbReference type="ChEBI" id="CHEBI:18420"/>
    </cofactor>
</comment>
<comment type="activity regulation">
    <text evidence="1">Phosphorylation of Thr-84 by OXSR1 inhibits activation (By similarity). Activated by binding small G proteins. Binding of GTP-bound CDC42 or RAC1 to the autoregulatory region releases monomers from the autoinhibited dimer, and enables activation by phosphorylation of Thr-422 (By similarity).</text>
</comment>
<comment type="subunit">
    <text evidence="3 4">Homodimer in its autoinhibited state. Active as monomer. Interacts with GIT1 (By similarity). Component of cytoplasmic complexes, which also contains PXN, ARHGEF7 and GIT1. Interacts with NISCH (By similarity). Interacts with DVL1; mediates the formation of a DVL1, MUSK and PAK1 ternary complex involved in AChR clustering (By similarity). Binds to the caspase-cleaved p110 isoform of CDC2L1 and CDC2L2, p110C, but not the full-length proteins (By similarity). Interacts with ARHGEF7 (By similarity). Interacts tightly with GTP-bound but not GDP-bound CDC42/P21 and RAC1. Probably found in a ternary complex composed of DSCAM, PAK1 and RAC1. Interacts with DSCAM (via cytoplasmic domain); the interaction is direct and enhanced in presence of RAC1. Interacts with SCRIB (By similarity). Interacts with PDPK1 (By similarity). Interacts (via kinase domain) with RAF1 (By similarity). Interacts with NCK1 and NCK2 (By similarity). Interacts with TBCB (By similarity). Interacts with BRSK2 (By similarity). Interacts with SNAI1 (By similarity). Interacts with CIB1 (via N-terminal region); the interaction is direct, promotes PAK1 activity and occurs in a calcium-dependent manner. Interacts with INPP5K (By similarity). Interacts with gamma-tubulin (By similarity). Interacts with RHOU; the interaction promotes PAK1 activation (By similarity).</text>
</comment>
<comment type="subcellular location">
    <subcellularLocation>
        <location evidence="4">Cytoplasm</location>
    </subcellularLocation>
    <subcellularLocation>
        <location evidence="4">Cell junction</location>
        <location evidence="4">Focal adhesion</location>
    </subcellularLocation>
    <subcellularLocation>
        <location evidence="4">Cell projection</location>
        <location evidence="4">Lamellipodium</location>
    </subcellularLocation>
    <subcellularLocation>
        <location evidence="4">Cell membrane</location>
    </subcellularLocation>
    <subcellularLocation>
        <location evidence="4">Cell projection</location>
        <location evidence="4">Ruffle membrane</location>
    </subcellularLocation>
    <subcellularLocation>
        <location evidence="4">Cell projection</location>
        <location evidence="4">Invadopodium</location>
    </subcellularLocation>
    <subcellularLocation>
        <location evidence="4">Nucleus</location>
        <location evidence="4">Nucleoplasm</location>
    </subcellularLocation>
    <subcellularLocation>
        <location evidence="4">Chromosome</location>
    </subcellularLocation>
    <subcellularLocation>
        <location evidence="4">Cytoplasm</location>
        <location evidence="4">Cytoskeleton</location>
        <location evidence="4">Microtubule organizing center</location>
        <location evidence="4">Centrosome</location>
    </subcellularLocation>
    <text evidence="3 4">Recruited to the cell membrane by interaction with CDC42 and RAC1. Recruited to focal adhesions upon activation. Colocalized with CIB1 within membrane ruffles during cell spreading upon readhesion to fibronectin. Colocalizes with RUFY3, F-actin and other core migration components in invadopodia at the cell periphery (By similarity). Upon DNA damage, translocates to the nucleoplasm when phosphorylated at Thr-212 where is co-recruited with MORC2 on damaged chromatin (By similarity). Localization to the centrosome does not depend upon the presence of gamma-tubulin (By similarity). Localization of the active, but not inactive, protein to the adhesions and edge of lamellipodia is mediated by interaction with GIT1 (By similarity).</text>
</comment>
<comment type="PTM">
    <text evidence="2 3 4">Autophosphorylated in trans, meaning that in a dimer, one kinase molecule phosphorylates the other one. Activated by autophosphorylation at Thr-422 in response to a conformation change, triggered by interaction with GTP-bound CDC42 or RAC1. Activated by phosphorylation at Thr-422 by BRSK2 and by PDPK1. Phosphorylated by JAK2 in response to PRL; this increases PAK1 kinase activity. Phosphorylated at Ser-21 by PKB/AKT; this reduces interaction with NCK1 and association with focal adhesion sites (By similarity). Upon DNA damage, phosphorylated at Thr-211 and translocates to the nucleoplasm (By similarity). Phosphorylated at tyrosine residues, which can be enhanced by NTN1 (By similarity).</text>
</comment>
<comment type="similarity">
    <text evidence="10">Belongs to the protein kinase superfamily. STE Ser/Thr protein kinase family. STE20 subfamily.</text>
</comment>
<organism>
    <name type="scientific">Bos taurus</name>
    <name type="common">Bovine</name>
    <dbReference type="NCBI Taxonomy" id="9913"/>
    <lineage>
        <taxon>Eukaryota</taxon>
        <taxon>Metazoa</taxon>
        <taxon>Chordata</taxon>
        <taxon>Craniata</taxon>
        <taxon>Vertebrata</taxon>
        <taxon>Euteleostomi</taxon>
        <taxon>Mammalia</taxon>
        <taxon>Eutheria</taxon>
        <taxon>Laurasiatheria</taxon>
        <taxon>Artiodactyla</taxon>
        <taxon>Ruminantia</taxon>
        <taxon>Pecora</taxon>
        <taxon>Bovidae</taxon>
        <taxon>Bovinae</taxon>
        <taxon>Bos</taxon>
    </lineage>
</organism>
<protein>
    <recommendedName>
        <fullName evidence="10">Serine/threonine-protein kinase PAK 1</fullName>
        <ecNumber evidence="4">2.7.11.1</ecNumber>
    </recommendedName>
    <alternativeName>
        <fullName evidence="4">Alpha-PAK</fullName>
    </alternativeName>
    <alternativeName>
        <fullName evidence="4">p21-activated kinase 1</fullName>
        <shortName>PAK-1</shortName>
    </alternativeName>
    <alternativeName>
        <fullName evidence="3">p65-PAK</fullName>
    </alternativeName>
</protein>
<accession>Q08E52</accession>